<organism>
    <name type="scientific">Carboxydothermus hydrogenoformans (strain ATCC BAA-161 / DSM 6008 / Z-2901)</name>
    <dbReference type="NCBI Taxonomy" id="246194"/>
    <lineage>
        <taxon>Bacteria</taxon>
        <taxon>Bacillati</taxon>
        <taxon>Bacillota</taxon>
        <taxon>Clostridia</taxon>
        <taxon>Thermoanaerobacterales</taxon>
        <taxon>Thermoanaerobacteraceae</taxon>
        <taxon>Carboxydothermus</taxon>
    </lineage>
</organism>
<dbReference type="EC" id="2.1.3.2" evidence="1"/>
<dbReference type="EMBL" id="CP000141">
    <property type="protein sequence ID" value="ABB13726.1"/>
    <property type="molecule type" value="Genomic_DNA"/>
</dbReference>
<dbReference type="RefSeq" id="WP_011344409.1">
    <property type="nucleotide sequence ID" value="NC_007503.1"/>
</dbReference>
<dbReference type="SMR" id="Q3AC00"/>
<dbReference type="FunCoup" id="Q3AC00">
    <property type="interactions" value="447"/>
</dbReference>
<dbReference type="STRING" id="246194.CHY_1502"/>
<dbReference type="KEGG" id="chy:CHY_1502"/>
<dbReference type="eggNOG" id="COG0540">
    <property type="taxonomic scope" value="Bacteria"/>
</dbReference>
<dbReference type="HOGENOM" id="CLU_043846_2_0_9"/>
<dbReference type="InParanoid" id="Q3AC00"/>
<dbReference type="OrthoDB" id="9802587at2"/>
<dbReference type="UniPathway" id="UPA00070">
    <property type="reaction ID" value="UER00116"/>
</dbReference>
<dbReference type="Proteomes" id="UP000002706">
    <property type="component" value="Chromosome"/>
</dbReference>
<dbReference type="GO" id="GO:0005829">
    <property type="term" value="C:cytosol"/>
    <property type="evidence" value="ECO:0007669"/>
    <property type="project" value="TreeGrafter"/>
</dbReference>
<dbReference type="GO" id="GO:0016597">
    <property type="term" value="F:amino acid binding"/>
    <property type="evidence" value="ECO:0007669"/>
    <property type="project" value="InterPro"/>
</dbReference>
<dbReference type="GO" id="GO:0004070">
    <property type="term" value="F:aspartate carbamoyltransferase activity"/>
    <property type="evidence" value="ECO:0007669"/>
    <property type="project" value="UniProtKB-UniRule"/>
</dbReference>
<dbReference type="GO" id="GO:0006207">
    <property type="term" value="P:'de novo' pyrimidine nucleobase biosynthetic process"/>
    <property type="evidence" value="ECO:0007669"/>
    <property type="project" value="InterPro"/>
</dbReference>
<dbReference type="GO" id="GO:0044205">
    <property type="term" value="P:'de novo' UMP biosynthetic process"/>
    <property type="evidence" value="ECO:0007669"/>
    <property type="project" value="UniProtKB-UniRule"/>
</dbReference>
<dbReference type="GO" id="GO:0006520">
    <property type="term" value="P:amino acid metabolic process"/>
    <property type="evidence" value="ECO:0007669"/>
    <property type="project" value="InterPro"/>
</dbReference>
<dbReference type="FunFam" id="3.40.50.1370:FF:000007">
    <property type="entry name" value="Aspartate carbamoyltransferase"/>
    <property type="match status" value="1"/>
</dbReference>
<dbReference type="Gene3D" id="3.40.50.1370">
    <property type="entry name" value="Aspartate/ornithine carbamoyltransferase"/>
    <property type="match status" value="2"/>
</dbReference>
<dbReference type="HAMAP" id="MF_00001">
    <property type="entry name" value="Asp_carb_tr"/>
    <property type="match status" value="1"/>
</dbReference>
<dbReference type="InterPro" id="IPR006132">
    <property type="entry name" value="Asp/Orn_carbamoyltranf_P-bd"/>
</dbReference>
<dbReference type="InterPro" id="IPR006130">
    <property type="entry name" value="Asp/Orn_carbamoylTrfase"/>
</dbReference>
<dbReference type="InterPro" id="IPR036901">
    <property type="entry name" value="Asp/Orn_carbamoylTrfase_sf"/>
</dbReference>
<dbReference type="InterPro" id="IPR002082">
    <property type="entry name" value="Asp_carbamoyltransf"/>
</dbReference>
<dbReference type="InterPro" id="IPR006131">
    <property type="entry name" value="Asp_carbamoyltransf_Asp/Orn-bd"/>
</dbReference>
<dbReference type="NCBIfam" id="TIGR00670">
    <property type="entry name" value="asp_carb_tr"/>
    <property type="match status" value="1"/>
</dbReference>
<dbReference type="NCBIfam" id="NF002032">
    <property type="entry name" value="PRK00856.1"/>
    <property type="match status" value="1"/>
</dbReference>
<dbReference type="PANTHER" id="PTHR45753:SF6">
    <property type="entry name" value="ASPARTATE CARBAMOYLTRANSFERASE"/>
    <property type="match status" value="1"/>
</dbReference>
<dbReference type="PANTHER" id="PTHR45753">
    <property type="entry name" value="ORNITHINE CARBAMOYLTRANSFERASE, MITOCHONDRIAL"/>
    <property type="match status" value="1"/>
</dbReference>
<dbReference type="Pfam" id="PF00185">
    <property type="entry name" value="OTCace"/>
    <property type="match status" value="1"/>
</dbReference>
<dbReference type="Pfam" id="PF02729">
    <property type="entry name" value="OTCace_N"/>
    <property type="match status" value="1"/>
</dbReference>
<dbReference type="PRINTS" id="PR00100">
    <property type="entry name" value="AOTCASE"/>
</dbReference>
<dbReference type="PRINTS" id="PR00101">
    <property type="entry name" value="ATCASE"/>
</dbReference>
<dbReference type="SUPFAM" id="SSF53671">
    <property type="entry name" value="Aspartate/ornithine carbamoyltransferase"/>
    <property type="match status" value="1"/>
</dbReference>
<dbReference type="PROSITE" id="PS00097">
    <property type="entry name" value="CARBAMOYLTRANSFERASE"/>
    <property type="match status" value="1"/>
</dbReference>
<evidence type="ECO:0000255" key="1">
    <source>
        <dbReference type="HAMAP-Rule" id="MF_00001"/>
    </source>
</evidence>
<gene>
    <name evidence="1" type="primary">pyrB</name>
    <name type="ordered locus">CHY_1502</name>
</gene>
<sequence>MVKRKHLLGLQELSKEEINTILDIARPMRDIIMRDIKKVPTLRGKTVATLFYEPSTRTRSSFELAAKFLSADTLSINVSSSSVQKGESLIDTIRTLEAMGVEIIAVRHQQSGVPKFISLNTKMSVINAGDGFHEHPTQALLDLFTIKQKLYKIEGLKVAIIGDIYHSRVARSNIWGLLKLGAEVTVCGPPSLIPVEIEKLGVRVEINLQRTLEWADVVNVLRIQKERQDAGYLTTLDEYRDWYGLTQEKLEKLKGKKLLILHPGPLNRGVEIDDYVADSPNAVVNEQVTNGVAVRMAVLYLLAGGNESGNVD</sequence>
<name>PYRB_CARHZ</name>
<keyword id="KW-0665">Pyrimidine biosynthesis</keyword>
<keyword id="KW-1185">Reference proteome</keyword>
<keyword id="KW-0808">Transferase</keyword>
<protein>
    <recommendedName>
        <fullName evidence="1">Aspartate carbamoyltransferase catalytic subunit</fullName>
        <ecNumber evidence="1">2.1.3.2</ecNumber>
    </recommendedName>
    <alternativeName>
        <fullName evidence="1">Aspartate transcarbamylase</fullName>
        <shortName evidence="1">ATCase</shortName>
    </alternativeName>
</protein>
<reference key="1">
    <citation type="journal article" date="2005" name="PLoS Genet.">
        <title>Life in hot carbon monoxide: the complete genome sequence of Carboxydothermus hydrogenoformans Z-2901.</title>
        <authorList>
            <person name="Wu M."/>
            <person name="Ren Q."/>
            <person name="Durkin A.S."/>
            <person name="Daugherty S.C."/>
            <person name="Brinkac L.M."/>
            <person name="Dodson R.J."/>
            <person name="Madupu R."/>
            <person name="Sullivan S.A."/>
            <person name="Kolonay J.F."/>
            <person name="Nelson W.C."/>
            <person name="Tallon L.J."/>
            <person name="Jones K.M."/>
            <person name="Ulrich L.E."/>
            <person name="Gonzalez J.M."/>
            <person name="Zhulin I.B."/>
            <person name="Robb F.T."/>
            <person name="Eisen J.A."/>
        </authorList>
    </citation>
    <scope>NUCLEOTIDE SEQUENCE [LARGE SCALE GENOMIC DNA]</scope>
    <source>
        <strain>ATCC BAA-161 / DSM 6008 / Z-2901</strain>
    </source>
</reference>
<feature type="chain" id="PRO_0000321087" description="Aspartate carbamoyltransferase catalytic subunit">
    <location>
        <begin position="1"/>
        <end position="312"/>
    </location>
</feature>
<feature type="binding site" evidence="1">
    <location>
        <position position="57"/>
    </location>
    <ligand>
        <name>carbamoyl phosphate</name>
        <dbReference type="ChEBI" id="CHEBI:58228"/>
    </ligand>
</feature>
<feature type="binding site" evidence="1">
    <location>
        <position position="58"/>
    </location>
    <ligand>
        <name>carbamoyl phosphate</name>
        <dbReference type="ChEBI" id="CHEBI:58228"/>
    </ligand>
</feature>
<feature type="binding site" evidence="1">
    <location>
        <position position="85"/>
    </location>
    <ligand>
        <name>L-aspartate</name>
        <dbReference type="ChEBI" id="CHEBI:29991"/>
    </ligand>
</feature>
<feature type="binding site" evidence="1">
    <location>
        <position position="107"/>
    </location>
    <ligand>
        <name>carbamoyl phosphate</name>
        <dbReference type="ChEBI" id="CHEBI:58228"/>
    </ligand>
</feature>
<feature type="binding site" evidence="1">
    <location>
        <position position="135"/>
    </location>
    <ligand>
        <name>carbamoyl phosphate</name>
        <dbReference type="ChEBI" id="CHEBI:58228"/>
    </ligand>
</feature>
<feature type="binding site" evidence="1">
    <location>
        <position position="138"/>
    </location>
    <ligand>
        <name>carbamoyl phosphate</name>
        <dbReference type="ChEBI" id="CHEBI:58228"/>
    </ligand>
</feature>
<feature type="binding site" evidence="1">
    <location>
        <position position="168"/>
    </location>
    <ligand>
        <name>L-aspartate</name>
        <dbReference type="ChEBI" id="CHEBI:29991"/>
    </ligand>
</feature>
<feature type="binding site" evidence="1">
    <location>
        <position position="222"/>
    </location>
    <ligand>
        <name>L-aspartate</name>
        <dbReference type="ChEBI" id="CHEBI:29991"/>
    </ligand>
</feature>
<feature type="binding site" evidence="1">
    <location>
        <position position="264"/>
    </location>
    <ligand>
        <name>carbamoyl phosphate</name>
        <dbReference type="ChEBI" id="CHEBI:58228"/>
    </ligand>
</feature>
<feature type="binding site" evidence="1">
    <location>
        <position position="265"/>
    </location>
    <ligand>
        <name>carbamoyl phosphate</name>
        <dbReference type="ChEBI" id="CHEBI:58228"/>
    </ligand>
</feature>
<proteinExistence type="inferred from homology"/>
<comment type="function">
    <text evidence="1">Catalyzes the condensation of carbamoyl phosphate and aspartate to form carbamoyl aspartate and inorganic phosphate, the committed step in the de novo pyrimidine nucleotide biosynthesis pathway.</text>
</comment>
<comment type="catalytic activity">
    <reaction evidence="1">
        <text>carbamoyl phosphate + L-aspartate = N-carbamoyl-L-aspartate + phosphate + H(+)</text>
        <dbReference type="Rhea" id="RHEA:20013"/>
        <dbReference type="ChEBI" id="CHEBI:15378"/>
        <dbReference type="ChEBI" id="CHEBI:29991"/>
        <dbReference type="ChEBI" id="CHEBI:32814"/>
        <dbReference type="ChEBI" id="CHEBI:43474"/>
        <dbReference type="ChEBI" id="CHEBI:58228"/>
        <dbReference type="EC" id="2.1.3.2"/>
    </reaction>
</comment>
<comment type="pathway">
    <text evidence="1">Pyrimidine metabolism; UMP biosynthesis via de novo pathway; (S)-dihydroorotate from bicarbonate: step 2/3.</text>
</comment>
<comment type="subunit">
    <text evidence="1">Heterododecamer (2C3:3R2) of six catalytic PyrB chains organized as two trimers (C3), and six regulatory PyrI chains organized as three dimers (R2).</text>
</comment>
<comment type="similarity">
    <text evidence="1">Belongs to the aspartate/ornithine carbamoyltransferase superfamily. ATCase family.</text>
</comment>
<accession>Q3AC00</accession>